<comment type="function">
    <text evidence="1">May be involved in the development of the mandibular molar tooth germ at the bud stage.</text>
</comment>
<comment type="subcellular location">
    <subcellularLocation>
        <location evidence="3">Nucleus</location>
    </subcellularLocation>
</comment>
<comment type="similarity">
    <text evidence="3">Belongs to the Odd C2H2-type zinc-finger protein family.</text>
</comment>
<name>OSR2_BOVIN</name>
<sequence length="276" mass="30556">MGSKALPAPIPLHPSLQLTNYSFLQAVNTFPAAVDHLQGLYGLSAVQTMHMNHWTLGYPNVHEITRSTITEMAAAQGLVDARFSFPALPFTTHLFHPKQGAIAHVLPALHKDRPRFDFANLAVAATQEDPPKIADLSKLSPGLGSPISGLNKLTPDRKPSRGRLPSKTKKEFICKFCGRHFTKSYNLLIHERTHTDERPYTCDICHKAFRRQDHLRDHRYIHSKEKPFKCQECGKGFCQSRTLAVHKTLHMQTSSPTAASSAAKCSGETVICGGTA</sequence>
<reference key="1">
    <citation type="submission" date="2005-08" db="EMBL/GenBank/DDBJ databases">
        <authorList>
            <consortium name="NIH - Mammalian Gene Collection (MGC) project"/>
        </authorList>
    </citation>
    <scope>NUCLEOTIDE SEQUENCE [LARGE SCALE MRNA]</scope>
    <source>
        <strain>Crossbred X Angus</strain>
        <tissue>Ileum</tissue>
    </source>
</reference>
<evidence type="ECO:0000250" key="1">
    <source>
        <dbReference type="UniProtKB" id="Q91ZD1"/>
    </source>
</evidence>
<evidence type="ECO:0000255" key="2">
    <source>
        <dbReference type="PROSITE-ProRule" id="PRU00042"/>
    </source>
</evidence>
<evidence type="ECO:0000305" key="3"/>
<gene>
    <name evidence="1" type="primary">OSR2</name>
</gene>
<feature type="chain" id="PRO_0000047006" description="Protein odd-skipped-related 2">
    <location>
        <begin position="1"/>
        <end position="276"/>
    </location>
</feature>
<feature type="zinc finger region" description="C2H2-type 1" evidence="2">
    <location>
        <begin position="172"/>
        <end position="194"/>
    </location>
</feature>
<feature type="zinc finger region" description="C2H2-type 2" evidence="2">
    <location>
        <begin position="200"/>
        <end position="222"/>
    </location>
</feature>
<feature type="zinc finger region" description="C2H2-type 3" evidence="2">
    <location>
        <begin position="228"/>
        <end position="250"/>
    </location>
</feature>
<protein>
    <recommendedName>
        <fullName evidence="3">Protein odd-skipped-related 2</fullName>
    </recommendedName>
</protein>
<keyword id="KW-0479">Metal-binding</keyword>
<keyword id="KW-0539">Nucleus</keyword>
<keyword id="KW-1185">Reference proteome</keyword>
<keyword id="KW-0677">Repeat</keyword>
<keyword id="KW-0862">Zinc</keyword>
<keyword id="KW-0863">Zinc-finger</keyword>
<accession>Q3T135</accession>
<dbReference type="EMBL" id="BC102143">
    <property type="protein sequence ID" value="AAI02144.1"/>
    <property type="molecule type" value="mRNA"/>
</dbReference>
<dbReference type="RefSeq" id="NP_001029500.1">
    <property type="nucleotide sequence ID" value="NM_001034328.2"/>
</dbReference>
<dbReference type="BMRB" id="Q3T135"/>
<dbReference type="SMR" id="Q3T135"/>
<dbReference type="FunCoup" id="Q3T135">
    <property type="interactions" value="75"/>
</dbReference>
<dbReference type="STRING" id="9913.ENSBTAP00000017584"/>
<dbReference type="PaxDb" id="9913-ENSBTAP00000017584"/>
<dbReference type="GeneID" id="508692"/>
<dbReference type="KEGG" id="bta:508692"/>
<dbReference type="CTD" id="116039"/>
<dbReference type="VEuPathDB" id="HostDB:ENSBTAG00000013213"/>
<dbReference type="eggNOG" id="KOG1721">
    <property type="taxonomic scope" value="Eukaryota"/>
</dbReference>
<dbReference type="HOGENOM" id="CLU_051854_0_0_1"/>
<dbReference type="InParanoid" id="Q3T135"/>
<dbReference type="OMA" id="CTHRARK"/>
<dbReference type="OrthoDB" id="9451254at2759"/>
<dbReference type="TreeFam" id="TF350876"/>
<dbReference type="Proteomes" id="UP000009136">
    <property type="component" value="Chromosome 14"/>
</dbReference>
<dbReference type="Bgee" id="ENSBTAG00000013213">
    <property type="expression patterns" value="Expressed in vas deferens and 91 other cell types or tissues"/>
</dbReference>
<dbReference type="GO" id="GO:0005634">
    <property type="term" value="C:nucleus"/>
    <property type="evidence" value="ECO:0000250"/>
    <property type="project" value="UniProtKB"/>
</dbReference>
<dbReference type="GO" id="GO:0000981">
    <property type="term" value="F:DNA-binding transcription factor activity, RNA polymerase II-specific"/>
    <property type="evidence" value="ECO:0000318"/>
    <property type="project" value="GO_Central"/>
</dbReference>
<dbReference type="GO" id="GO:0000977">
    <property type="term" value="F:RNA polymerase II transcription regulatory region sequence-specific DNA binding"/>
    <property type="evidence" value="ECO:0000318"/>
    <property type="project" value="GO_Central"/>
</dbReference>
<dbReference type="GO" id="GO:0043565">
    <property type="term" value="F:sequence-specific DNA binding"/>
    <property type="evidence" value="ECO:0000250"/>
    <property type="project" value="UniProtKB"/>
</dbReference>
<dbReference type="GO" id="GO:0008270">
    <property type="term" value="F:zinc ion binding"/>
    <property type="evidence" value="ECO:0007669"/>
    <property type="project" value="UniProtKB-KW"/>
</dbReference>
<dbReference type="GO" id="GO:0060349">
    <property type="term" value="P:bone morphogenesis"/>
    <property type="evidence" value="ECO:0000250"/>
    <property type="project" value="UniProtKB"/>
</dbReference>
<dbReference type="GO" id="GO:0009792">
    <property type="term" value="P:embryo development ending in birth or egg hatching"/>
    <property type="evidence" value="ECO:0000250"/>
    <property type="project" value="UniProtKB"/>
</dbReference>
<dbReference type="GO" id="GO:0048704">
    <property type="term" value="P:embryonic skeletal system morphogenesis"/>
    <property type="evidence" value="ECO:0000250"/>
    <property type="project" value="UniProtKB"/>
</dbReference>
<dbReference type="GO" id="GO:0061029">
    <property type="term" value="P:eyelid development in camera-type eye"/>
    <property type="evidence" value="ECO:0000250"/>
    <property type="project" value="UniProtKB"/>
</dbReference>
<dbReference type="GO" id="GO:0001823">
    <property type="term" value="P:mesonephros development"/>
    <property type="evidence" value="ECO:0000250"/>
    <property type="project" value="UniProtKB"/>
</dbReference>
<dbReference type="GO" id="GO:0001656">
    <property type="term" value="P:metanephros development"/>
    <property type="evidence" value="ECO:0000250"/>
    <property type="project" value="UniProtKB"/>
</dbReference>
<dbReference type="GO" id="GO:0042474">
    <property type="term" value="P:middle ear morphogenesis"/>
    <property type="evidence" value="ECO:0000250"/>
    <property type="project" value="UniProtKB"/>
</dbReference>
<dbReference type="GO" id="GO:0000122">
    <property type="term" value="P:negative regulation of transcription by RNA polymerase II"/>
    <property type="evidence" value="ECO:0000318"/>
    <property type="project" value="GO_Central"/>
</dbReference>
<dbReference type="GO" id="GO:0042476">
    <property type="term" value="P:odontogenesis"/>
    <property type="evidence" value="ECO:0000250"/>
    <property type="project" value="UniProtKB"/>
</dbReference>
<dbReference type="GO" id="GO:0033687">
    <property type="term" value="P:osteoblast proliferation"/>
    <property type="evidence" value="ECO:0000250"/>
    <property type="project" value="UniProtKB"/>
</dbReference>
<dbReference type="GO" id="GO:0007389">
    <property type="term" value="P:pattern specification process"/>
    <property type="evidence" value="ECO:0000318"/>
    <property type="project" value="GO_Central"/>
</dbReference>
<dbReference type="GO" id="GO:0008284">
    <property type="term" value="P:positive regulation of cell population proliferation"/>
    <property type="evidence" value="ECO:0000250"/>
    <property type="project" value="UniProtKB"/>
</dbReference>
<dbReference type="GO" id="GO:0045893">
    <property type="term" value="P:positive regulation of DNA-templated transcription"/>
    <property type="evidence" value="ECO:0000250"/>
    <property type="project" value="UniProtKB"/>
</dbReference>
<dbReference type="GO" id="GO:0050679">
    <property type="term" value="P:positive regulation of epithelial cell proliferation"/>
    <property type="evidence" value="ECO:0000250"/>
    <property type="project" value="UniProtKB"/>
</dbReference>
<dbReference type="GO" id="GO:0010628">
    <property type="term" value="P:positive regulation of gene expression"/>
    <property type="evidence" value="ECO:0000250"/>
    <property type="project" value="UniProtKB"/>
</dbReference>
<dbReference type="GO" id="GO:0048793">
    <property type="term" value="P:pronephros development"/>
    <property type="evidence" value="ECO:0000318"/>
    <property type="project" value="GO_Central"/>
</dbReference>
<dbReference type="GO" id="GO:0060021">
    <property type="term" value="P:roof of mouth development"/>
    <property type="evidence" value="ECO:0000250"/>
    <property type="project" value="UniProtKB"/>
</dbReference>
<dbReference type="GO" id="GO:0001655">
    <property type="term" value="P:urogenital system development"/>
    <property type="evidence" value="ECO:0000318"/>
    <property type="project" value="GO_Central"/>
</dbReference>
<dbReference type="FunFam" id="3.30.160.60:FF:000254">
    <property type="entry name" value="Odd-skipped related transciption factor 1"/>
    <property type="match status" value="1"/>
</dbReference>
<dbReference type="FunFam" id="3.30.160.60:FF:000090">
    <property type="entry name" value="Odd-skipped-related transciption factor 2"/>
    <property type="match status" value="1"/>
</dbReference>
<dbReference type="FunFam" id="3.30.160.60:FF:000311">
    <property type="entry name" value="protein odd-skipped-related 2 isoform X1"/>
    <property type="match status" value="1"/>
</dbReference>
<dbReference type="Gene3D" id="3.30.160.60">
    <property type="entry name" value="Classic Zinc Finger"/>
    <property type="match status" value="3"/>
</dbReference>
<dbReference type="InterPro" id="IPR050717">
    <property type="entry name" value="C2H2-ZF_Transcription_Reg"/>
</dbReference>
<dbReference type="InterPro" id="IPR036236">
    <property type="entry name" value="Znf_C2H2_sf"/>
</dbReference>
<dbReference type="InterPro" id="IPR013087">
    <property type="entry name" value="Znf_C2H2_type"/>
</dbReference>
<dbReference type="PANTHER" id="PTHR14196">
    <property type="entry name" value="ODD-SKIPPED - RELATED"/>
    <property type="match status" value="1"/>
</dbReference>
<dbReference type="PANTHER" id="PTHR14196:SF4">
    <property type="entry name" value="PROTEIN ODD-SKIPPED-RELATED 2"/>
    <property type="match status" value="1"/>
</dbReference>
<dbReference type="Pfam" id="PF00096">
    <property type="entry name" value="zf-C2H2"/>
    <property type="match status" value="3"/>
</dbReference>
<dbReference type="SMART" id="SM00355">
    <property type="entry name" value="ZnF_C2H2"/>
    <property type="match status" value="3"/>
</dbReference>
<dbReference type="SUPFAM" id="SSF57667">
    <property type="entry name" value="beta-beta-alpha zinc fingers"/>
    <property type="match status" value="2"/>
</dbReference>
<dbReference type="PROSITE" id="PS00028">
    <property type="entry name" value="ZINC_FINGER_C2H2_1"/>
    <property type="match status" value="3"/>
</dbReference>
<dbReference type="PROSITE" id="PS50157">
    <property type="entry name" value="ZINC_FINGER_C2H2_2"/>
    <property type="match status" value="3"/>
</dbReference>
<organism>
    <name type="scientific">Bos taurus</name>
    <name type="common">Bovine</name>
    <dbReference type="NCBI Taxonomy" id="9913"/>
    <lineage>
        <taxon>Eukaryota</taxon>
        <taxon>Metazoa</taxon>
        <taxon>Chordata</taxon>
        <taxon>Craniata</taxon>
        <taxon>Vertebrata</taxon>
        <taxon>Euteleostomi</taxon>
        <taxon>Mammalia</taxon>
        <taxon>Eutheria</taxon>
        <taxon>Laurasiatheria</taxon>
        <taxon>Artiodactyla</taxon>
        <taxon>Ruminantia</taxon>
        <taxon>Pecora</taxon>
        <taxon>Bovidae</taxon>
        <taxon>Bovinae</taxon>
        <taxon>Bos</taxon>
    </lineage>
</organism>
<proteinExistence type="evidence at transcript level"/>